<evidence type="ECO:0000255" key="1">
    <source>
        <dbReference type="PROSITE-ProRule" id="PRU00238"/>
    </source>
</evidence>
<evidence type="ECO:0000269" key="2">
    <source>
    </source>
</evidence>
<feature type="initiator methionine" description="Removed" evidence="2">
    <location>
        <position position="1"/>
    </location>
</feature>
<feature type="chain" id="PRO_0000052967" description="Hemoglobin subunit beta">
    <location>
        <begin position="2"/>
        <end position="147"/>
    </location>
</feature>
<feature type="domain" description="Globin" evidence="1">
    <location>
        <begin position="3"/>
        <end position="147"/>
    </location>
</feature>
<feature type="binding site" description="distal binding residue">
    <location>
        <position position="64"/>
    </location>
    <ligand>
        <name>heme b</name>
        <dbReference type="ChEBI" id="CHEBI:60344"/>
    </ligand>
    <ligandPart>
        <name>Fe</name>
        <dbReference type="ChEBI" id="CHEBI:18248"/>
    </ligandPart>
</feature>
<feature type="binding site" description="proximal binding residue">
    <location>
        <position position="93"/>
    </location>
    <ligand>
        <name>heme b</name>
        <dbReference type="ChEBI" id="CHEBI:60344"/>
    </ligand>
    <ligandPart>
        <name>Fe</name>
        <dbReference type="ChEBI" id="CHEBI:18248"/>
    </ligandPart>
</feature>
<dbReference type="EMBL" id="AF067568">
    <property type="protein sequence ID" value="AAC41386.1"/>
    <property type="molecule type" value="mRNA"/>
</dbReference>
<dbReference type="PIR" id="S20271">
    <property type="entry name" value="S20271"/>
</dbReference>
<dbReference type="SMR" id="P29625"/>
<dbReference type="InParanoid" id="P29625"/>
<dbReference type="OrthoDB" id="9886081at2759"/>
<dbReference type="Proteomes" id="UP000515161">
    <property type="component" value="Unplaced"/>
</dbReference>
<dbReference type="GO" id="GO:0072562">
    <property type="term" value="C:blood microparticle"/>
    <property type="evidence" value="ECO:0007669"/>
    <property type="project" value="TreeGrafter"/>
</dbReference>
<dbReference type="GO" id="GO:0031838">
    <property type="term" value="C:haptoglobin-hemoglobin complex"/>
    <property type="evidence" value="ECO:0007669"/>
    <property type="project" value="TreeGrafter"/>
</dbReference>
<dbReference type="GO" id="GO:0005833">
    <property type="term" value="C:hemoglobin complex"/>
    <property type="evidence" value="ECO:0007669"/>
    <property type="project" value="InterPro"/>
</dbReference>
<dbReference type="GO" id="GO:0031720">
    <property type="term" value="F:haptoglobin binding"/>
    <property type="evidence" value="ECO:0007669"/>
    <property type="project" value="TreeGrafter"/>
</dbReference>
<dbReference type="GO" id="GO:0020037">
    <property type="term" value="F:heme binding"/>
    <property type="evidence" value="ECO:0007669"/>
    <property type="project" value="InterPro"/>
</dbReference>
<dbReference type="GO" id="GO:0046872">
    <property type="term" value="F:metal ion binding"/>
    <property type="evidence" value="ECO:0007669"/>
    <property type="project" value="UniProtKB-KW"/>
</dbReference>
<dbReference type="GO" id="GO:0043177">
    <property type="term" value="F:organic acid binding"/>
    <property type="evidence" value="ECO:0007669"/>
    <property type="project" value="TreeGrafter"/>
</dbReference>
<dbReference type="GO" id="GO:0019825">
    <property type="term" value="F:oxygen binding"/>
    <property type="evidence" value="ECO:0007669"/>
    <property type="project" value="InterPro"/>
</dbReference>
<dbReference type="GO" id="GO:0005344">
    <property type="term" value="F:oxygen carrier activity"/>
    <property type="evidence" value="ECO:0007669"/>
    <property type="project" value="UniProtKB-KW"/>
</dbReference>
<dbReference type="GO" id="GO:0004601">
    <property type="term" value="F:peroxidase activity"/>
    <property type="evidence" value="ECO:0007669"/>
    <property type="project" value="TreeGrafter"/>
</dbReference>
<dbReference type="GO" id="GO:0042744">
    <property type="term" value="P:hydrogen peroxide catabolic process"/>
    <property type="evidence" value="ECO:0007669"/>
    <property type="project" value="TreeGrafter"/>
</dbReference>
<dbReference type="CDD" id="cd08925">
    <property type="entry name" value="Hb-beta-like"/>
    <property type="match status" value="1"/>
</dbReference>
<dbReference type="FunFam" id="1.10.490.10:FF:000001">
    <property type="entry name" value="Hemoglobin subunit beta"/>
    <property type="match status" value="1"/>
</dbReference>
<dbReference type="Gene3D" id="1.10.490.10">
    <property type="entry name" value="Globins"/>
    <property type="match status" value="1"/>
</dbReference>
<dbReference type="InterPro" id="IPR000971">
    <property type="entry name" value="Globin"/>
</dbReference>
<dbReference type="InterPro" id="IPR009050">
    <property type="entry name" value="Globin-like_sf"/>
</dbReference>
<dbReference type="InterPro" id="IPR012292">
    <property type="entry name" value="Globin/Proto"/>
</dbReference>
<dbReference type="InterPro" id="IPR002337">
    <property type="entry name" value="Hemoglobin_b"/>
</dbReference>
<dbReference type="InterPro" id="IPR050056">
    <property type="entry name" value="Hemoglobin_oxygen_transport"/>
</dbReference>
<dbReference type="PANTHER" id="PTHR11442">
    <property type="entry name" value="HEMOGLOBIN FAMILY MEMBER"/>
    <property type="match status" value="1"/>
</dbReference>
<dbReference type="PANTHER" id="PTHR11442:SF7">
    <property type="entry name" value="HEMOGLOBIN SUBUNIT EPSILON"/>
    <property type="match status" value="1"/>
</dbReference>
<dbReference type="Pfam" id="PF00042">
    <property type="entry name" value="Globin"/>
    <property type="match status" value="1"/>
</dbReference>
<dbReference type="PRINTS" id="PR00814">
    <property type="entry name" value="BETAHAEM"/>
</dbReference>
<dbReference type="SUPFAM" id="SSF46458">
    <property type="entry name" value="Globin-like"/>
    <property type="match status" value="1"/>
</dbReference>
<dbReference type="PROSITE" id="PS01033">
    <property type="entry name" value="GLOBIN"/>
    <property type="match status" value="1"/>
</dbReference>
<accession>P29625</accession>
<accession>Q71UP5</accession>
<sequence length="147" mass="16180">MVNWTKTEKATITDIFSHLDYDDIGPKALSRCLIVYPWTQRYFSGFGNLYNAAAIIGNAKVAEHGIKVLHGLDLGLKKMDNIEAAYADLSSLHSEKLHVDPDNFKLLSDCITIVLAAKLGSAFTAETQATFQKFLGAVMSALGKQYH</sequence>
<reference key="1">
    <citation type="journal article" date="1998" name="Proc. Natl. Acad. Sci. U.S.A.">
        <title>Antarctic fish hemoglobins: evidence for adaptive evolution at subzero temperature.</title>
        <authorList>
            <person name="Bargelloni L."/>
            <person name="Marcato S."/>
            <person name="Patarnello T."/>
        </authorList>
    </citation>
    <scope>NUCLEOTIDE SEQUENCE [MRNA]</scope>
</reference>
<reference key="2">
    <citation type="journal article" date="1992" name="Arch. Biochem. Biophys.">
        <title>The amino acid sequence and oxygen-binding properties of the single hemoglobin of the cold-adapted Antarctic teleost Gymnodraco acuticeps.</title>
        <authorList>
            <person name="Tamburrini M."/>
            <person name="Brancaccio A."/>
            <person name="Ippoliti R."/>
            <person name="di Prisco G."/>
        </authorList>
    </citation>
    <scope>PROTEIN SEQUENCE OF 2-147</scope>
</reference>
<proteinExistence type="evidence at protein level"/>
<protein>
    <recommendedName>
        <fullName>Hemoglobin subunit beta</fullName>
    </recommendedName>
    <alternativeName>
        <fullName>Beta-globin</fullName>
    </alternativeName>
    <alternativeName>
        <fullName>Hemoglobin beta chain</fullName>
    </alternativeName>
</protein>
<comment type="function">
    <text>Involved in oxygen transport from gills to the various peripheral tissues.</text>
</comment>
<comment type="subunit">
    <text>Heterotetramer of two alpha chains and two beta chains.</text>
</comment>
<comment type="tissue specificity">
    <text>Red blood cells.</text>
</comment>
<comment type="similarity">
    <text evidence="1">Belongs to the globin family.</text>
</comment>
<name>HBB_GYMAC</name>
<keyword id="KW-0903">Direct protein sequencing</keyword>
<keyword id="KW-0349">Heme</keyword>
<keyword id="KW-0408">Iron</keyword>
<keyword id="KW-0479">Metal-binding</keyword>
<keyword id="KW-0561">Oxygen transport</keyword>
<keyword id="KW-1185">Reference proteome</keyword>
<keyword id="KW-0813">Transport</keyword>
<organism>
    <name type="scientific">Gymnodraco acuticeps</name>
    <name type="common">Antarctic dragonfish</name>
    <dbReference type="NCBI Taxonomy" id="8218"/>
    <lineage>
        <taxon>Eukaryota</taxon>
        <taxon>Metazoa</taxon>
        <taxon>Chordata</taxon>
        <taxon>Craniata</taxon>
        <taxon>Vertebrata</taxon>
        <taxon>Euteleostomi</taxon>
        <taxon>Actinopterygii</taxon>
        <taxon>Neopterygii</taxon>
        <taxon>Teleostei</taxon>
        <taxon>Neoteleostei</taxon>
        <taxon>Acanthomorphata</taxon>
        <taxon>Eupercaria</taxon>
        <taxon>Perciformes</taxon>
        <taxon>Notothenioidei</taxon>
        <taxon>Bathydraconidae</taxon>
        <taxon>Gymnodraco</taxon>
    </lineage>
</organism>
<gene>
    <name type="primary">hbb</name>
</gene>